<accession>P31243</accession>
<keyword id="KW-0002">3D-structure</keyword>
<keyword id="KW-0998">Cell outer membrane</keyword>
<keyword id="KW-0903">Direct protein sequencing</keyword>
<keyword id="KW-0406">Ion transport</keyword>
<keyword id="KW-0472">Membrane</keyword>
<keyword id="KW-0626">Porin</keyword>
<keyword id="KW-0812">Transmembrane</keyword>
<keyword id="KW-1134">Transmembrane beta strand</keyword>
<keyword id="KW-0813">Transport</keyword>
<comment type="function">
    <text>Forms channels that allow the passive diffusion of small hydrophilic solutes up to an exclusion limit of about 0.6 kDa.</text>
</comment>
<comment type="subunit">
    <text>Homotrimer.</text>
</comment>
<comment type="subcellular location">
    <subcellularLocation>
        <location>Cell outer membrane</location>
        <topology>Multi-pass membrane protein</topology>
    </subcellularLocation>
</comment>
<comment type="domain">
    <text>The monomer consists of a 16-stranded antiparallel beta-pleated sheet barrel (171 residues), three short alpha-helices (18 residues) and 13 hydrogen-bonded reverse turns (26 residues).</text>
</comment>
<organism>
    <name type="scientific">Rhodobacter capsulatus</name>
    <name type="common">Rhodopseudomonas capsulata</name>
    <dbReference type="NCBI Taxonomy" id="1061"/>
    <lineage>
        <taxon>Bacteria</taxon>
        <taxon>Pseudomonadati</taxon>
        <taxon>Pseudomonadota</taxon>
        <taxon>Alphaproteobacteria</taxon>
        <taxon>Rhodobacterales</taxon>
        <taxon>Rhodobacter group</taxon>
        <taxon>Rhodobacter</taxon>
    </lineage>
</organism>
<name>PORI_RHOCA</name>
<protein>
    <recommendedName>
        <fullName>Porin</fullName>
    </recommendedName>
</protein>
<proteinExistence type="evidence at protein level"/>
<feature type="chain" id="PRO_0000198028" description="Porin">
    <location>
        <begin position="1"/>
        <end position="301"/>
    </location>
</feature>
<feature type="strand" evidence="1">
    <location>
        <begin position="2"/>
        <end position="14"/>
    </location>
</feature>
<feature type="strand" evidence="1">
    <location>
        <begin position="19"/>
        <end position="34"/>
    </location>
</feature>
<feature type="strand" evidence="1">
    <location>
        <begin position="40"/>
        <end position="46"/>
    </location>
</feature>
<feature type="helix" evidence="1">
    <location>
        <begin position="47"/>
        <end position="49"/>
    </location>
</feature>
<feature type="helix" evidence="1">
    <location>
        <begin position="50"/>
        <end position="53"/>
    </location>
</feature>
<feature type="turn" evidence="1">
    <location>
        <begin position="54"/>
        <end position="56"/>
    </location>
</feature>
<feature type="strand" evidence="1">
    <location>
        <begin position="57"/>
        <end position="65"/>
    </location>
</feature>
<feature type="strand" evidence="1">
    <location>
        <begin position="68"/>
        <end position="74"/>
    </location>
</feature>
<feature type="helix" evidence="1">
    <location>
        <begin position="78"/>
        <end position="83"/>
    </location>
</feature>
<feature type="turn" evidence="1">
    <location>
        <begin position="90"/>
        <end position="93"/>
    </location>
</feature>
<feature type="strand" evidence="1">
    <location>
        <begin position="105"/>
        <end position="107"/>
    </location>
</feature>
<feature type="helix" evidence="2">
    <location>
        <begin position="113"/>
        <end position="115"/>
    </location>
</feature>
<feature type="strand" evidence="1">
    <location>
        <begin position="118"/>
        <end position="125"/>
    </location>
</feature>
<feature type="strand" evidence="1">
    <location>
        <begin position="128"/>
        <end position="134"/>
    </location>
</feature>
<feature type="strand" evidence="1">
    <location>
        <begin position="137"/>
        <end position="139"/>
    </location>
</feature>
<feature type="strand" evidence="1">
    <location>
        <begin position="148"/>
        <end position="158"/>
    </location>
</feature>
<feature type="strand" evidence="1">
    <location>
        <begin position="161"/>
        <end position="171"/>
    </location>
</feature>
<feature type="turn" evidence="1">
    <location>
        <begin position="175"/>
        <end position="177"/>
    </location>
</feature>
<feature type="strand" evidence="1">
    <location>
        <begin position="181"/>
        <end position="192"/>
    </location>
</feature>
<feature type="strand" evidence="1">
    <location>
        <begin position="195"/>
        <end position="207"/>
    </location>
</feature>
<feature type="helix" evidence="1">
    <location>
        <begin position="208"/>
        <end position="214"/>
    </location>
</feature>
<feature type="strand" evidence="2">
    <location>
        <begin position="221"/>
        <end position="223"/>
    </location>
</feature>
<feature type="strand" evidence="1">
    <location>
        <begin position="226"/>
        <end position="240"/>
    </location>
</feature>
<feature type="strand" evidence="1">
    <location>
        <begin position="243"/>
        <end position="254"/>
    </location>
</feature>
<feature type="turn" evidence="1">
    <location>
        <begin position="255"/>
        <end position="257"/>
    </location>
</feature>
<feature type="strand" evidence="1">
    <location>
        <begin position="258"/>
        <end position="272"/>
    </location>
</feature>
<feature type="strand" evidence="1">
    <location>
        <begin position="275"/>
        <end position="284"/>
    </location>
</feature>
<feature type="strand" evidence="1">
    <location>
        <begin position="286"/>
        <end position="288"/>
    </location>
</feature>
<feature type="strand" evidence="1">
    <location>
        <begin position="292"/>
        <end position="301"/>
    </location>
</feature>
<reference key="1">
    <citation type="journal article" date="1991" name="Eur. J. Biochem.">
        <title>Primary structure of porin from Rhodobacter capsulatus.</title>
        <authorList>
            <person name="Schiltz E."/>
            <person name="Kreusch A."/>
            <person name="Nestel U."/>
            <person name="Schulz G.E."/>
        </authorList>
    </citation>
    <scope>PROTEIN SEQUENCE</scope>
    <source>
        <strain>DSM 938 / 37b4</strain>
    </source>
</reference>
<reference key="2">
    <citation type="journal article" date="1990" name="FEBS Lett.">
        <title>The three-dimensional structure of porin from Rhodobacter capsulatus at 3-A resolution.</title>
        <authorList>
            <person name="Weiss M.S."/>
            <person name="Wacker T."/>
            <person name="Weckesser J."/>
            <person name="Welte W."/>
            <person name="Schulz G.E."/>
        </authorList>
    </citation>
    <scope>X-RAY CRYSTALLOGRAPHY (3.0 ANGSTROMS)</scope>
    <source>
        <strain>DSM 938 / 37b4</strain>
    </source>
</reference>
<reference key="3">
    <citation type="journal article" date="1991" name="FEBS Lett.">
        <title>The structure of porin from Rhodobacter capsulatus at 1.8-A resolution.</title>
        <authorList>
            <person name="Weiss M.S."/>
            <person name="Kreusch A."/>
            <person name="Schiltz E."/>
            <person name="Nestel U."/>
            <person name="Welte W."/>
            <person name="Weckesser J."/>
            <person name="Schulz G.E."/>
        </authorList>
    </citation>
    <scope>X-RAY CRYSTALLOGRAPHY (1.8 ANGSTROMS)</scope>
    <source>
        <strain>DSM 938 / 37b4</strain>
    </source>
</reference>
<reference key="4">
    <citation type="journal article" date="1992" name="J. Mol. Biol.">
        <title>Structure of porin refined at 1.8-A resolution.</title>
        <authorList>
            <person name="Weiss M.S."/>
            <person name="Schulz G.E."/>
        </authorList>
    </citation>
    <scope>X-RAY CRYSTALLOGRAPHY (1.8 ANGSTROMS)</scope>
</reference>
<sequence>EVKLSGDARMGVMYNGDDWNFSSRSRVLFTMSGTTDSGLEFGASFKAHESVGAETGEDGTVFLSGAFGKIEMGDALGASEALFGDLYEVGYTDLDDRGGNDIPYLTGDERLTAEDNPVLLYTYSAGAFSVAASMSDGKVGETSEDDAQEMAVAAAYTFGNYTVGLGYEKIDSPDTALMADMEQLELAAIAKFGATNVKAYYADGELDRDFARAVFDLTPVAAAATAVDHKAYGLSVDSTFGATTVGGYVQVLDIDTIDDVTYYGLGASYDLGGGASIVGGIADNDLPNSDMVADLGVKFKF</sequence>
<dbReference type="PIR" id="S16070">
    <property type="entry name" value="S16070"/>
</dbReference>
<dbReference type="PDB" id="2POR">
    <property type="method" value="X-ray"/>
    <property type="resolution" value="1.80 A"/>
    <property type="chains" value="A=1-301"/>
</dbReference>
<dbReference type="PDB" id="3POR">
    <property type="method" value="X-ray"/>
    <property type="resolution" value="2.50 A"/>
    <property type="chains" value="A=1-301"/>
</dbReference>
<dbReference type="PDBsum" id="2POR"/>
<dbReference type="PDBsum" id="3POR"/>
<dbReference type="SMR" id="P31243"/>
<dbReference type="DrugBank" id="DB04233">
    <property type="generic name" value="(Hydroxyethyloxy)Tri(Ethyloxy)Octane"/>
</dbReference>
<dbReference type="EvolutionaryTrace" id="P31243"/>
<dbReference type="GO" id="GO:0009279">
    <property type="term" value="C:cell outer membrane"/>
    <property type="evidence" value="ECO:0007669"/>
    <property type="project" value="UniProtKB-SubCell"/>
</dbReference>
<dbReference type="GO" id="GO:0046930">
    <property type="term" value="C:pore complex"/>
    <property type="evidence" value="ECO:0007669"/>
    <property type="project" value="UniProtKB-KW"/>
</dbReference>
<dbReference type="GO" id="GO:0015288">
    <property type="term" value="F:porin activity"/>
    <property type="evidence" value="ECO:0007669"/>
    <property type="project" value="UniProtKB-KW"/>
</dbReference>
<dbReference type="GO" id="GO:0006811">
    <property type="term" value="P:monoatomic ion transport"/>
    <property type="evidence" value="ECO:0007669"/>
    <property type="project" value="UniProtKB-KW"/>
</dbReference>
<dbReference type="Gene3D" id="2.40.160.10">
    <property type="entry name" value="Porin"/>
    <property type="match status" value="1"/>
</dbReference>
<dbReference type="InterPro" id="IPR033900">
    <property type="entry name" value="Gram_neg_porin_domain"/>
</dbReference>
<dbReference type="InterPro" id="IPR023614">
    <property type="entry name" value="Porin_dom_sf"/>
</dbReference>
<dbReference type="Pfam" id="PF13609">
    <property type="entry name" value="Porin_4"/>
    <property type="match status" value="1"/>
</dbReference>
<dbReference type="SUPFAM" id="SSF56935">
    <property type="entry name" value="Porins"/>
    <property type="match status" value="1"/>
</dbReference>
<evidence type="ECO:0007829" key="1">
    <source>
        <dbReference type="PDB" id="2POR"/>
    </source>
</evidence>
<evidence type="ECO:0007829" key="2">
    <source>
        <dbReference type="PDB" id="3POR"/>
    </source>
</evidence>